<dbReference type="EMBL" id="X03124">
    <property type="protein sequence ID" value="CAA26902.1"/>
    <property type="molecule type" value="mRNA"/>
</dbReference>
<dbReference type="EMBL" id="X02598">
    <property type="protein sequence ID" value="CAA26443.1"/>
    <property type="molecule type" value="mRNA"/>
</dbReference>
<dbReference type="EMBL" id="M12670">
    <property type="protein sequence ID" value="AAA52436.1"/>
    <property type="molecule type" value="mRNA"/>
</dbReference>
<dbReference type="EMBL" id="M59906">
    <property type="protein sequence ID" value="AAA63234.1"/>
    <property type="molecule type" value="mRNA"/>
</dbReference>
<dbReference type="EMBL" id="S68252">
    <property type="protein sequence ID" value="AAD14009.1"/>
    <property type="molecule type" value="mRNA"/>
</dbReference>
<dbReference type="EMBL" id="BC000866">
    <property type="protein sequence ID" value="AAH00866.1"/>
    <property type="molecule type" value="mRNA"/>
</dbReference>
<dbReference type="EMBL" id="L47361">
    <property type="protein sequence ID" value="AAA75558.1"/>
    <property type="molecule type" value="Genomic_DNA"/>
</dbReference>
<dbReference type="EMBL" id="D11139">
    <property type="protein sequence ID" value="BAA01913.1"/>
    <property type="molecule type" value="Genomic_DNA"/>
</dbReference>
<dbReference type="CCDS" id="CCDS14281.1"/>
<dbReference type="PIR" id="A93372">
    <property type="entry name" value="ZYHUEP"/>
</dbReference>
<dbReference type="RefSeq" id="NP_003245.1">
    <property type="nucleotide sequence ID" value="NM_003254.3"/>
</dbReference>
<dbReference type="PDB" id="1D2B">
    <property type="method" value="NMR"/>
    <property type="chains" value="A=24-149"/>
</dbReference>
<dbReference type="PDB" id="1OO9">
    <property type="method" value="NMR"/>
    <property type="chains" value="B=24-149"/>
</dbReference>
<dbReference type="PDB" id="1UEA">
    <property type="method" value="X-ray"/>
    <property type="resolution" value="2.80 A"/>
    <property type="chains" value="B/D=24-207"/>
</dbReference>
<dbReference type="PDB" id="2J0T">
    <property type="method" value="X-ray"/>
    <property type="resolution" value="2.54 A"/>
    <property type="chains" value="D/E/F=24-149"/>
</dbReference>
<dbReference type="PDB" id="3MA2">
    <property type="method" value="X-ray"/>
    <property type="resolution" value="2.05 A"/>
    <property type="chains" value="B/C=24-148"/>
</dbReference>
<dbReference type="PDB" id="3V96">
    <property type="method" value="X-ray"/>
    <property type="resolution" value="1.90 A"/>
    <property type="chains" value="A=24-207"/>
</dbReference>
<dbReference type="PDB" id="6MAV">
    <property type="method" value="X-ray"/>
    <property type="resolution" value="2.37 A"/>
    <property type="chains" value="B=24-207"/>
</dbReference>
<dbReference type="PDB" id="6N9D">
    <property type="method" value="X-ray"/>
    <property type="resolution" value="2.67 A"/>
    <property type="chains" value="B=24-207"/>
</dbReference>
<dbReference type="PDB" id="7S7L">
    <property type="method" value="X-ray"/>
    <property type="resolution" value="2.34 A"/>
    <property type="chains" value="B=24-207"/>
</dbReference>
<dbReference type="PDB" id="7S7M">
    <property type="method" value="X-ray"/>
    <property type="resolution" value="3.00 A"/>
    <property type="chains" value="B=24-207"/>
</dbReference>
<dbReference type="PDBsum" id="1D2B"/>
<dbReference type="PDBsum" id="1OO9"/>
<dbReference type="PDBsum" id="1UEA"/>
<dbReference type="PDBsum" id="2J0T"/>
<dbReference type="PDBsum" id="3MA2"/>
<dbReference type="PDBsum" id="3V96"/>
<dbReference type="PDBsum" id="6MAV"/>
<dbReference type="PDBsum" id="6N9D"/>
<dbReference type="PDBsum" id="7S7L"/>
<dbReference type="PDBsum" id="7S7M"/>
<dbReference type="BMRB" id="P01033"/>
<dbReference type="SMR" id="P01033"/>
<dbReference type="BioGRID" id="112932">
    <property type="interactions" value="54"/>
</dbReference>
<dbReference type="CORUM" id="P01033"/>
<dbReference type="DIP" id="DIP-1107N"/>
<dbReference type="FunCoup" id="P01033">
    <property type="interactions" value="295"/>
</dbReference>
<dbReference type="IntAct" id="P01033">
    <property type="interactions" value="30"/>
</dbReference>
<dbReference type="MINT" id="P01033"/>
<dbReference type="STRING" id="9606.ENSP00000218388"/>
<dbReference type="MEROPS" id="I35.001"/>
<dbReference type="GlyConnect" id="367">
    <property type="glycosylation" value="62 N-Linked glycans (2 sites)"/>
</dbReference>
<dbReference type="GlyCosmos" id="P01033">
    <property type="glycosylation" value="2 sites, 82 glycans"/>
</dbReference>
<dbReference type="GlyGen" id="P01033">
    <property type="glycosylation" value="4 sites, 135 N-linked glycans (2 sites), 1 O-linked glycan (1 site)"/>
</dbReference>
<dbReference type="iPTMnet" id="P01033"/>
<dbReference type="PhosphoSitePlus" id="P01033"/>
<dbReference type="SwissPalm" id="P01033"/>
<dbReference type="BioMuta" id="TIMP1"/>
<dbReference type="DMDM" id="135850"/>
<dbReference type="CPTAC" id="CPTAC-680"/>
<dbReference type="jPOST" id="P01033"/>
<dbReference type="MassIVE" id="P01033"/>
<dbReference type="PaxDb" id="9606-ENSP00000218388"/>
<dbReference type="PeptideAtlas" id="P01033"/>
<dbReference type="ProteomicsDB" id="51310"/>
<dbReference type="Pumba" id="P01033"/>
<dbReference type="ABCD" id="P01033">
    <property type="antibodies" value="1 sequenced antibody"/>
</dbReference>
<dbReference type="Antibodypedia" id="11411">
    <property type="antibodies" value="1163 antibodies from 50 providers"/>
</dbReference>
<dbReference type="CPTC" id="P01033">
    <property type="antibodies" value="2 antibodies"/>
</dbReference>
<dbReference type="DNASU" id="7076"/>
<dbReference type="Ensembl" id="ENST00000218388.9">
    <property type="protein sequence ID" value="ENSP00000218388.4"/>
    <property type="gene ID" value="ENSG00000102265.12"/>
</dbReference>
<dbReference type="GeneID" id="7076"/>
<dbReference type="KEGG" id="hsa:7076"/>
<dbReference type="MANE-Select" id="ENST00000218388.9">
    <property type="protein sequence ID" value="ENSP00000218388.4"/>
    <property type="RefSeq nucleotide sequence ID" value="NM_003254.3"/>
    <property type="RefSeq protein sequence ID" value="NP_003245.1"/>
</dbReference>
<dbReference type="AGR" id="HGNC:11820"/>
<dbReference type="CTD" id="7076"/>
<dbReference type="DisGeNET" id="7076"/>
<dbReference type="GeneCards" id="TIMP1"/>
<dbReference type="HGNC" id="HGNC:11820">
    <property type="gene designation" value="TIMP1"/>
</dbReference>
<dbReference type="HPA" id="ENSG00000102265">
    <property type="expression patterns" value="Tissue enhanced (urinary)"/>
</dbReference>
<dbReference type="MIM" id="305370">
    <property type="type" value="gene"/>
</dbReference>
<dbReference type="neXtProt" id="NX_P01033"/>
<dbReference type="OpenTargets" id="ENSG00000102265"/>
<dbReference type="PharmGKB" id="PA36526"/>
<dbReference type="VEuPathDB" id="HostDB:ENSG00000102265"/>
<dbReference type="eggNOG" id="KOG4745">
    <property type="taxonomic scope" value="Eukaryota"/>
</dbReference>
<dbReference type="GeneTree" id="ENSGT00940000161081"/>
<dbReference type="HOGENOM" id="CLU_084029_0_0_1"/>
<dbReference type="InParanoid" id="P01033"/>
<dbReference type="OMA" id="LWTDQFL"/>
<dbReference type="OrthoDB" id="6041373at2759"/>
<dbReference type="PAN-GO" id="P01033">
    <property type="GO annotations" value="8 GO annotations based on evolutionary models"/>
</dbReference>
<dbReference type="PhylomeDB" id="P01033"/>
<dbReference type="TreeFam" id="TF317409"/>
<dbReference type="BRENDA" id="3.4.24.22">
    <property type="organism ID" value="2681"/>
</dbReference>
<dbReference type="PathwayCommons" id="P01033"/>
<dbReference type="Reactome" id="R-HSA-114608">
    <property type="pathway name" value="Platelet degranulation"/>
</dbReference>
<dbReference type="Reactome" id="R-HSA-1592389">
    <property type="pathway name" value="Activation of Matrix Metalloproteinases"/>
</dbReference>
<dbReference type="Reactome" id="R-HSA-381426">
    <property type="pathway name" value="Regulation of Insulin-like Growth Factor (IGF) transport and uptake by Insulin-like Growth Factor Binding Proteins (IGFBPs)"/>
</dbReference>
<dbReference type="Reactome" id="R-HSA-6783783">
    <property type="pathway name" value="Interleukin-10 signaling"/>
</dbReference>
<dbReference type="Reactome" id="R-HSA-6785807">
    <property type="pathway name" value="Interleukin-4 and Interleukin-13 signaling"/>
</dbReference>
<dbReference type="Reactome" id="R-HSA-8957275">
    <property type="pathway name" value="Post-translational protein phosphorylation"/>
</dbReference>
<dbReference type="Reactome" id="R-HSA-9839383">
    <property type="pathway name" value="TGFBR3 PTM regulation"/>
</dbReference>
<dbReference type="SignaLink" id="P01033"/>
<dbReference type="SIGNOR" id="P01033"/>
<dbReference type="BioGRID-ORCS" id="7076">
    <property type="hits" value="18 hits in 794 CRISPR screens"/>
</dbReference>
<dbReference type="ChiTaRS" id="TIMP1">
    <property type="organism name" value="human"/>
</dbReference>
<dbReference type="EvolutionaryTrace" id="P01033"/>
<dbReference type="GeneWiki" id="TIMP1"/>
<dbReference type="GenomeRNAi" id="7076"/>
<dbReference type="Pharos" id="P01033">
    <property type="development level" value="Tbio"/>
</dbReference>
<dbReference type="PRO" id="PR:P01033"/>
<dbReference type="Proteomes" id="UP000005640">
    <property type="component" value="Chromosome X"/>
</dbReference>
<dbReference type="RNAct" id="P01033">
    <property type="molecule type" value="protein"/>
</dbReference>
<dbReference type="Bgee" id="ENSG00000102265">
    <property type="expression patterns" value="Expressed in right coronary artery and 202 other cell types or tissues"/>
</dbReference>
<dbReference type="ExpressionAtlas" id="P01033">
    <property type="expression patterns" value="baseline and differential"/>
</dbReference>
<dbReference type="GO" id="GO:0005604">
    <property type="term" value="C:basement membrane"/>
    <property type="evidence" value="ECO:0007669"/>
    <property type="project" value="Ensembl"/>
</dbReference>
<dbReference type="GO" id="GO:0005788">
    <property type="term" value="C:endoplasmic reticulum lumen"/>
    <property type="evidence" value="ECO:0000304"/>
    <property type="project" value="Reactome"/>
</dbReference>
<dbReference type="GO" id="GO:0070062">
    <property type="term" value="C:extracellular exosome"/>
    <property type="evidence" value="ECO:0007005"/>
    <property type="project" value="UniProtKB"/>
</dbReference>
<dbReference type="GO" id="GO:0031012">
    <property type="term" value="C:extracellular matrix"/>
    <property type="evidence" value="ECO:0000318"/>
    <property type="project" value="GO_Central"/>
</dbReference>
<dbReference type="GO" id="GO:0005576">
    <property type="term" value="C:extracellular region"/>
    <property type="evidence" value="ECO:0000304"/>
    <property type="project" value="Reactome"/>
</dbReference>
<dbReference type="GO" id="GO:0005615">
    <property type="term" value="C:extracellular space"/>
    <property type="evidence" value="ECO:0000314"/>
    <property type="project" value="UniProtKB"/>
</dbReference>
<dbReference type="GO" id="GO:0031093">
    <property type="term" value="C:platelet alpha granule lumen"/>
    <property type="evidence" value="ECO:0000304"/>
    <property type="project" value="Reactome"/>
</dbReference>
<dbReference type="GO" id="GO:0005125">
    <property type="term" value="F:cytokine activity"/>
    <property type="evidence" value="ECO:0000314"/>
    <property type="project" value="UniProtKB"/>
</dbReference>
<dbReference type="GO" id="GO:0008083">
    <property type="term" value="F:growth factor activity"/>
    <property type="evidence" value="ECO:0007669"/>
    <property type="project" value="UniProtKB-KW"/>
</dbReference>
<dbReference type="GO" id="GO:0008191">
    <property type="term" value="F:metalloendopeptidase inhibitor activity"/>
    <property type="evidence" value="ECO:0000314"/>
    <property type="project" value="UniProtKB"/>
</dbReference>
<dbReference type="GO" id="GO:0030414">
    <property type="term" value="F:peptidase inhibitor activity"/>
    <property type="evidence" value="ECO:0000314"/>
    <property type="project" value="UniProtKB"/>
</dbReference>
<dbReference type="GO" id="GO:0002020">
    <property type="term" value="F:protease binding"/>
    <property type="evidence" value="ECO:0007669"/>
    <property type="project" value="Ensembl"/>
</dbReference>
<dbReference type="GO" id="GO:0008270">
    <property type="term" value="F:zinc ion binding"/>
    <property type="evidence" value="ECO:0000314"/>
    <property type="project" value="UniProtKB"/>
</dbReference>
<dbReference type="GO" id="GO:0051216">
    <property type="term" value="P:cartilage development"/>
    <property type="evidence" value="ECO:0007669"/>
    <property type="project" value="Ensembl"/>
</dbReference>
<dbReference type="GO" id="GO:1901653">
    <property type="term" value="P:cellular response to peptide"/>
    <property type="evidence" value="ECO:0007669"/>
    <property type="project" value="Ensembl"/>
</dbReference>
<dbReference type="GO" id="GO:0071492">
    <property type="term" value="P:cellular response to UV-A"/>
    <property type="evidence" value="ECO:0000314"/>
    <property type="project" value="UniProtKB"/>
</dbReference>
<dbReference type="GO" id="GO:0002248">
    <property type="term" value="P:connective tissue replacement involved in inflammatory response wound healing"/>
    <property type="evidence" value="ECO:0007669"/>
    <property type="project" value="Ensembl"/>
</dbReference>
<dbReference type="GO" id="GO:0043066">
    <property type="term" value="P:negative regulation of apoptotic process"/>
    <property type="evidence" value="ECO:0007669"/>
    <property type="project" value="Ensembl"/>
</dbReference>
<dbReference type="GO" id="GO:0043086">
    <property type="term" value="P:negative regulation of catalytic activity"/>
    <property type="evidence" value="ECO:0000314"/>
    <property type="project" value="UniProtKB"/>
</dbReference>
<dbReference type="GO" id="GO:0010951">
    <property type="term" value="P:negative regulation of endopeptidase activity"/>
    <property type="evidence" value="ECO:0000314"/>
    <property type="project" value="UniProtKB"/>
</dbReference>
<dbReference type="GO" id="GO:0051045">
    <property type="term" value="P:negative regulation of membrane protein ectodomain proteolysis"/>
    <property type="evidence" value="ECO:0000314"/>
    <property type="project" value="UniProtKB"/>
</dbReference>
<dbReference type="GO" id="GO:1905049">
    <property type="term" value="P:negative regulation of metallopeptidase activity"/>
    <property type="evidence" value="ECO:0000314"/>
    <property type="project" value="UniProtKB"/>
</dbReference>
<dbReference type="GO" id="GO:1901164">
    <property type="term" value="P:negative regulation of trophoblast cell migration"/>
    <property type="evidence" value="ECO:0000315"/>
    <property type="project" value="BHF-UCL"/>
</dbReference>
<dbReference type="GO" id="GO:0008284">
    <property type="term" value="P:positive regulation of cell population proliferation"/>
    <property type="evidence" value="ECO:0000314"/>
    <property type="project" value="UniProtKB"/>
</dbReference>
<dbReference type="GO" id="GO:2001044">
    <property type="term" value="P:regulation of integrin-mediated signaling pathway"/>
    <property type="evidence" value="ECO:0000315"/>
    <property type="project" value="UniProtKB"/>
</dbReference>
<dbReference type="GO" id="GO:0034097">
    <property type="term" value="P:response to cytokine"/>
    <property type="evidence" value="ECO:0000318"/>
    <property type="project" value="GO_Central"/>
</dbReference>
<dbReference type="GO" id="GO:0009725">
    <property type="term" value="P:response to hormone"/>
    <property type="evidence" value="ECO:0000318"/>
    <property type="project" value="GO_Central"/>
</dbReference>
<dbReference type="GO" id="GO:0043434">
    <property type="term" value="P:response to peptide hormone"/>
    <property type="evidence" value="ECO:0007669"/>
    <property type="project" value="Ensembl"/>
</dbReference>
<dbReference type="CDD" id="cd03585">
    <property type="entry name" value="NTR_TIMP"/>
    <property type="match status" value="1"/>
</dbReference>
<dbReference type="FunFam" id="2.40.50.120:FF:000016">
    <property type="entry name" value="Metalloproteinase inhibitor 1"/>
    <property type="match status" value="1"/>
</dbReference>
<dbReference type="FunFam" id="3.90.370.10:FF:000001">
    <property type="entry name" value="Metalloproteinase inhibitor 3"/>
    <property type="match status" value="1"/>
</dbReference>
<dbReference type="Gene3D" id="2.40.50.120">
    <property type="match status" value="1"/>
</dbReference>
<dbReference type="Gene3D" id="3.90.370.10">
    <property type="entry name" value="Tissue inhibitor of metalloproteinase-1. Chain B, domain 1"/>
    <property type="match status" value="1"/>
</dbReference>
<dbReference type="InterPro" id="IPR001134">
    <property type="entry name" value="Netrin_domain"/>
</dbReference>
<dbReference type="InterPro" id="IPR001820">
    <property type="entry name" value="TIMP"/>
</dbReference>
<dbReference type="InterPro" id="IPR008993">
    <property type="entry name" value="TIMP-like_OB-fold"/>
</dbReference>
<dbReference type="InterPro" id="IPR027465">
    <property type="entry name" value="TIMP_C"/>
</dbReference>
<dbReference type="InterPro" id="IPR030490">
    <property type="entry name" value="TIMP_CS"/>
</dbReference>
<dbReference type="PANTHER" id="PTHR11844">
    <property type="entry name" value="METALLOPROTEASE INHIBITOR"/>
    <property type="match status" value="1"/>
</dbReference>
<dbReference type="PANTHER" id="PTHR11844:SF20">
    <property type="entry name" value="METALLOPROTEINASE INHIBITOR 1"/>
    <property type="match status" value="1"/>
</dbReference>
<dbReference type="Pfam" id="PF00965">
    <property type="entry name" value="TIMP"/>
    <property type="match status" value="1"/>
</dbReference>
<dbReference type="SMART" id="SM00206">
    <property type="entry name" value="NTR"/>
    <property type="match status" value="1"/>
</dbReference>
<dbReference type="SUPFAM" id="SSF50242">
    <property type="entry name" value="TIMP-like"/>
    <property type="match status" value="1"/>
</dbReference>
<dbReference type="PROSITE" id="PS50189">
    <property type="entry name" value="NTR"/>
    <property type="match status" value="1"/>
</dbReference>
<dbReference type="PROSITE" id="PS00288">
    <property type="entry name" value="TIMP"/>
    <property type="match status" value="1"/>
</dbReference>
<gene>
    <name type="primary">TIMP1</name>
    <name type="synonym">CLGI</name>
    <name type="synonym">TIMP</name>
</gene>
<evidence type="ECO:0000255" key="1">
    <source>
        <dbReference type="PROSITE-ProRule" id="PRU00295"/>
    </source>
</evidence>
<evidence type="ECO:0000269" key="2">
    <source>
    </source>
</evidence>
<evidence type="ECO:0000269" key="3">
    <source>
    </source>
</evidence>
<evidence type="ECO:0000269" key="4">
    <source>
    </source>
</evidence>
<evidence type="ECO:0000269" key="5">
    <source>
    </source>
</evidence>
<evidence type="ECO:0000269" key="6">
    <source>
    </source>
</evidence>
<evidence type="ECO:0000269" key="7">
    <source>
    </source>
</evidence>
<evidence type="ECO:0000269" key="8">
    <source>
    </source>
</evidence>
<evidence type="ECO:0000269" key="9">
    <source>
    </source>
</evidence>
<evidence type="ECO:0000269" key="10">
    <source>
    </source>
</evidence>
<evidence type="ECO:0000269" key="11">
    <source>
    </source>
</evidence>
<evidence type="ECO:0000269" key="12">
    <source>
    </source>
</evidence>
<evidence type="ECO:0000269" key="13">
    <source>
    </source>
</evidence>
<evidence type="ECO:0000269" key="14">
    <source>
    </source>
</evidence>
<evidence type="ECO:0000269" key="15">
    <source>
    </source>
</evidence>
<evidence type="ECO:0000269" key="16">
    <source>
    </source>
</evidence>
<evidence type="ECO:0000269" key="17">
    <source>
    </source>
</evidence>
<evidence type="ECO:0000269" key="18">
    <source>
    </source>
</evidence>
<evidence type="ECO:0000269" key="19">
    <source>
    </source>
</evidence>
<evidence type="ECO:0000269" key="20">
    <source>
    </source>
</evidence>
<evidence type="ECO:0000269" key="21">
    <source>
    </source>
</evidence>
<evidence type="ECO:0000269" key="22">
    <source>
    </source>
</evidence>
<evidence type="ECO:0000269" key="23">
    <source>
    </source>
</evidence>
<evidence type="ECO:0000269" key="24">
    <source>
    </source>
</evidence>
<evidence type="ECO:0000269" key="25">
    <source>
    </source>
</evidence>
<evidence type="ECO:0000269" key="26">
    <source>
    </source>
</evidence>
<evidence type="ECO:0000305" key="27"/>
<evidence type="ECO:0007744" key="28">
    <source>
        <dbReference type="PDB" id="3V96"/>
    </source>
</evidence>
<evidence type="ECO:0007829" key="29">
    <source>
        <dbReference type="PDB" id="1UEA"/>
    </source>
</evidence>
<evidence type="ECO:0007829" key="30">
    <source>
        <dbReference type="PDB" id="3V96"/>
    </source>
</evidence>
<evidence type="ECO:0007829" key="31">
    <source>
        <dbReference type="PDB" id="6MAV"/>
    </source>
</evidence>
<evidence type="ECO:0007829" key="32">
    <source>
        <dbReference type="PDB" id="7S7L"/>
    </source>
</evidence>
<sequence length="207" mass="23171">MAPFEPLASGILLLLWLIAPSRACTCVPPHPQTAFCNSDLVIRAKFVGTPEVNQTTLYQRYEIKMTKMYKGFQALGDAADIRFVYTPAMESVCGYFHRSHNRSEEFLIAGKLQDGLLHITTCSFVAPWNSLSLAQRRGFTKTYTVGCEECTVFPCLSIPCKLQSGTHCLWTDQLLQGSEKGFQSRHLACLPREPGLCTWQSLRSQIA</sequence>
<organism>
    <name type="scientific">Homo sapiens</name>
    <name type="common">Human</name>
    <dbReference type="NCBI Taxonomy" id="9606"/>
    <lineage>
        <taxon>Eukaryota</taxon>
        <taxon>Metazoa</taxon>
        <taxon>Chordata</taxon>
        <taxon>Craniata</taxon>
        <taxon>Vertebrata</taxon>
        <taxon>Euteleostomi</taxon>
        <taxon>Mammalia</taxon>
        <taxon>Eutheria</taxon>
        <taxon>Euarchontoglires</taxon>
        <taxon>Primates</taxon>
        <taxon>Haplorrhini</taxon>
        <taxon>Catarrhini</taxon>
        <taxon>Hominidae</taxon>
        <taxon>Homo</taxon>
    </lineage>
</organism>
<feature type="signal peptide" evidence="5 8 12 20 21 22">
    <location>
        <begin position="1"/>
        <end position="23"/>
    </location>
</feature>
<feature type="chain" id="PRO_0000034323" description="Metalloproteinase inhibitor 1">
    <location>
        <begin position="24"/>
        <end position="207"/>
    </location>
</feature>
<feature type="domain" description="NTR" evidence="1">
    <location>
        <begin position="24"/>
        <end position="147"/>
    </location>
</feature>
<feature type="region of interest" description="Involved in metalloproteinase-binding" evidence="16 28">
    <location>
        <begin position="24"/>
        <end position="27"/>
    </location>
</feature>
<feature type="region of interest" description="Involved in metalloproteinase-binding" evidence="16 28">
    <location>
        <begin position="90"/>
        <end position="91"/>
    </location>
</feature>
<feature type="region of interest" description="Involved in metalloproteinase-binding" evidence="16 28">
    <location>
        <begin position="179"/>
        <end position="180"/>
    </location>
</feature>
<feature type="binding site" evidence="16">
    <location>
        <position position="24"/>
    </location>
    <ligand>
        <name>Zn(2+)</name>
        <dbReference type="ChEBI" id="CHEBI:29105"/>
        <note>ligand shared with metalloproteinase partner</note>
    </ligand>
</feature>
<feature type="site" description="Involved in metalloproteinase-binding" evidence="16 28">
    <location>
        <position position="57"/>
    </location>
</feature>
<feature type="site" description="Involved in metalloproteinase-binding" evidence="16 28">
    <location>
        <position position="158"/>
    </location>
</feature>
<feature type="modified residue" description="Phosphoserine; by FAM20C" evidence="19">
    <location>
        <position position="178"/>
    </location>
</feature>
<feature type="glycosylation site" id="CAR_000002" description="N-linked (GlcNAc...) (complex) asparagine" evidence="6 7 9 13">
    <location>
        <position position="53"/>
    </location>
</feature>
<feature type="glycosylation site" id="CAR_000003" description="N-linked (GlcNAc...) asparagine" evidence="9">
    <location>
        <position position="101"/>
    </location>
</feature>
<feature type="disulfide bond" evidence="1 15">
    <location>
        <begin position="24"/>
        <end position="93"/>
    </location>
</feature>
<feature type="disulfide bond" evidence="2 14 15 16 20">
    <location>
        <begin position="26"/>
        <end position="122"/>
    </location>
</feature>
<feature type="disulfide bond" evidence="2 14 15 16 20">
    <location>
        <begin position="36"/>
        <end position="147"/>
    </location>
</feature>
<feature type="disulfide bond" evidence="2 14 15 16 20">
    <location>
        <begin position="150"/>
        <end position="197"/>
    </location>
</feature>
<feature type="disulfide bond" evidence="2 14 15 16 20">
    <location>
        <begin position="155"/>
        <end position="160"/>
    </location>
</feature>
<feature type="disulfide bond" evidence="2 14 15 16 20">
    <location>
        <begin position="168"/>
        <end position="189"/>
    </location>
</feature>
<feature type="mutagenesis site" description="Reduced interaction with metalloproteinase." evidence="11">
    <original>T</original>
    <variation>E</variation>
    <variation>G</variation>
    <variation>K</variation>
    <variation>Q</variation>
    <variation>R</variation>
    <location>
        <position position="25"/>
    </location>
</feature>
<feature type="mutagenesis site" description="Normal interaction with metalloproteinase." evidence="11">
    <original>T</original>
    <variation>V</variation>
    <location>
        <position position="25"/>
    </location>
</feature>
<feature type="mutagenesis site" description="Nearly abolishes metalloproteinase inhibition." evidence="23">
    <original>H</original>
    <variation>A</variation>
    <location>
        <position position="30"/>
    </location>
</feature>
<feature type="mutagenesis site" description="Nearly abolishes metalloproteinase inhibition." evidence="23">
    <original>Q</original>
    <variation>A</variation>
    <location>
        <position position="32"/>
    </location>
</feature>
<feature type="mutagenesis site" description="Decreases protein flexibility and increases affinity for MMP14." evidence="14">
    <original>T</original>
    <variation>L</variation>
    <location>
        <position position="121"/>
    </location>
</feature>
<feature type="sequence conflict" description="In Ref. 2; CAA26443." evidence="27" ref="2">
    <original>A</original>
    <variation>P</variation>
    <location>
        <position position="23"/>
    </location>
</feature>
<feature type="sequence conflict" description="In Ref. 12; BAA01913." evidence="27" ref="12">
    <original>A</original>
    <variation>P</variation>
    <location>
        <position position="44"/>
    </location>
</feature>
<feature type="strand" evidence="32">
    <location>
        <begin position="25"/>
        <end position="27"/>
    </location>
</feature>
<feature type="helix" evidence="30">
    <location>
        <begin position="31"/>
        <end position="37"/>
    </location>
</feature>
<feature type="strand" evidence="30">
    <location>
        <begin position="39"/>
        <end position="46"/>
    </location>
</feature>
<feature type="turn" evidence="31">
    <location>
        <begin position="54"/>
        <end position="56"/>
    </location>
</feature>
<feature type="strand" evidence="30">
    <location>
        <begin position="57"/>
        <end position="70"/>
    </location>
</feature>
<feature type="helix" evidence="32">
    <location>
        <begin position="72"/>
        <end position="74"/>
    </location>
</feature>
<feature type="turn" evidence="29">
    <location>
        <begin position="77"/>
        <end position="79"/>
    </location>
</feature>
<feature type="strand" evidence="30">
    <location>
        <begin position="83"/>
        <end position="89"/>
    </location>
</feature>
<feature type="helix" evidence="30">
    <location>
        <begin position="90"/>
        <end position="92"/>
    </location>
</feature>
<feature type="strand" evidence="30">
    <location>
        <begin position="105"/>
        <end position="113"/>
    </location>
</feature>
<feature type="strand" evidence="30">
    <location>
        <begin position="116"/>
        <end position="118"/>
    </location>
</feature>
<feature type="strand" evidence="32">
    <location>
        <begin position="121"/>
        <end position="123"/>
    </location>
</feature>
<feature type="strand" evidence="30">
    <location>
        <begin position="125"/>
        <end position="127"/>
    </location>
</feature>
<feature type="helix" evidence="30">
    <location>
        <begin position="128"/>
        <end position="130"/>
    </location>
</feature>
<feature type="helix" evidence="30">
    <location>
        <begin position="133"/>
        <end position="140"/>
    </location>
</feature>
<feature type="helix" evidence="30">
    <location>
        <begin position="143"/>
        <end position="145"/>
    </location>
</feature>
<feature type="turn" evidence="30">
    <location>
        <begin position="146"/>
        <end position="149"/>
    </location>
</feature>
<feature type="strand" evidence="30">
    <location>
        <begin position="151"/>
        <end position="154"/>
    </location>
</feature>
<feature type="strand" evidence="30">
    <location>
        <begin position="157"/>
        <end position="159"/>
    </location>
</feature>
<feature type="strand" evidence="30">
    <location>
        <begin position="167"/>
        <end position="170"/>
    </location>
</feature>
<feature type="helix" evidence="30">
    <location>
        <begin position="172"/>
        <end position="176"/>
    </location>
</feature>
<feature type="strand" evidence="30">
    <location>
        <begin position="177"/>
        <end position="181"/>
    </location>
</feature>
<feature type="helix" evidence="30">
    <location>
        <begin position="182"/>
        <end position="186"/>
    </location>
</feature>
<feature type="strand" evidence="30">
    <location>
        <begin position="188"/>
        <end position="193"/>
    </location>
</feature>
<feature type="strand" evidence="30">
    <location>
        <begin position="196"/>
        <end position="200"/>
    </location>
</feature>
<accession>P01033</accession>
<accession>Q14252</accession>
<accession>Q9UCU1</accession>
<protein>
    <recommendedName>
        <fullName>Metalloproteinase inhibitor 1</fullName>
    </recommendedName>
    <alternativeName>
        <fullName>Erythroid-potentiating activity</fullName>
        <shortName>EPA</shortName>
    </alternativeName>
    <alternativeName>
        <fullName>Fibroblast collagenase inhibitor</fullName>
        <shortName>Collagenase inhibitor</shortName>
    </alternativeName>
    <alternativeName>
        <fullName>Tissue inhibitor of metalloproteinases 1</fullName>
        <shortName>TIMP-1</shortName>
    </alternativeName>
</protein>
<proteinExistence type="evidence at protein level"/>
<reference key="1">
    <citation type="journal article" date="1985" name="Nature">
        <title>Sequence of human tissue inhibitor of metalloproteinases and its identity to erythroid-potentiating activity.</title>
        <authorList>
            <person name="Docherty A.J.P."/>
            <person name="Lyons A."/>
            <person name="Smith B.J."/>
            <person name="Wright E.M."/>
            <person name="Stephens P.E."/>
            <person name="Harris T.J.R."/>
            <person name="Murphy G."/>
            <person name="Reynolds J.J."/>
        </authorList>
    </citation>
    <scope>NUCLEOTIDE SEQUENCE [MRNA]</scope>
    <scope>PROTEIN SEQUENCE OF 24-51</scope>
    <scope>FUNCTION</scope>
    <scope>SUBCELLULAR LOCATION</scope>
    <scope>GLYCOSYLATION</scope>
</reference>
<reference key="2">
    <citation type="journal article" date="1985" name="Nature">
        <title>Molecular characterization and expression of the gene encoding human erythroid-potentiating activity.</title>
        <authorList>
            <person name="Gasson J.C."/>
            <person name="Golde D.W."/>
            <person name="Kaufman S.E."/>
            <person name="Westbrook C.A."/>
            <person name="Hewick R.M."/>
            <person name="Kaufman R.J."/>
            <person name="Wong G.G."/>
            <person name="Temple P.A."/>
            <person name="Leary A.C."/>
            <person name="Brown E.L."/>
            <person name="Orr E.C."/>
            <person name="Clark S.C."/>
        </authorList>
    </citation>
    <scope>NUCLEOTIDE SEQUENCE [MRNA]</scope>
    <scope>PROTEIN SEQUENCE OF 24-49</scope>
    <scope>SUBCELLULAR LOCATION</scope>
    <scope>GLYCOSYLATION</scope>
    <scope>FUNCTION</scope>
</reference>
<reference key="3">
    <citation type="journal article" date="1986" name="Proc. Natl. Acad. Sci. U.S.A.">
        <title>Primary structure and cDNA cloning of human fibroblast collagenase inhibitor.</title>
        <authorList>
            <person name="Carmichael D.F."/>
            <person name="Sommer A."/>
            <person name="Thompson R.C."/>
            <person name="Anderson D.C."/>
            <person name="Smith C.G."/>
            <person name="Welgus H.G."/>
            <person name="Stricklin G.P."/>
        </authorList>
    </citation>
    <scope>NUCLEOTIDE SEQUENCE [MRNA]</scope>
    <scope>PROTEIN SEQUENCE OF 24-207</scope>
    <scope>DISULFIDE BOND</scope>
    <scope>SUBCELLULAR LOCATION</scope>
    <scope>GLYCOSYLATION</scope>
</reference>
<reference key="4">
    <citation type="journal article" date="1987" name="Biotechnology (N.Y.)">
        <title>Molecular cloning and synthesis of biologically active human tissue inhibitor of metalloproteinases in yeast.</title>
        <authorList>
            <person name="Kaczorek M."/>
            <person name="Honore N."/>
            <person name="Ribes V."/>
            <person name="Dehoux P."/>
            <person name="Cornet P."/>
            <person name="Cartwright T."/>
            <person name="Streeck R.E."/>
        </authorList>
    </citation>
    <scope>NUCLEOTIDE SEQUENCE [MRNA]</scope>
</reference>
<reference key="5">
    <citation type="journal article" date="1990" name="DNA Cell Biol.">
        <title>Characterization of three abundant mRNAs from human ovarian granulosa cells.</title>
        <authorList>
            <person name="Rapp G."/>
            <person name="Freudenstein J."/>
            <person name="Klaudiny J."/>
            <person name="Mucha J."/>
            <person name="Wempe F."/>
            <person name="Zimmer M."/>
            <person name="Scheit K.H."/>
        </authorList>
    </citation>
    <scope>NUCLEOTIDE SEQUENCE [MRNA]</scope>
    <source>
        <tissue>Ovary</tissue>
    </source>
</reference>
<reference key="6">
    <citation type="journal article" date="1993" name="Curr. Eye Res.">
        <title>Characterization of a human corneal metalloproteinase inhibitor (TIMP-1).</title>
        <authorList>
            <person name="Opbroek A."/>
            <person name="Kenney M.C."/>
            <person name="Brown D."/>
        </authorList>
    </citation>
    <scope>NUCLEOTIDE SEQUENCE [MRNA]</scope>
</reference>
<reference key="7">
    <citation type="journal article" date="2004" name="Genome Res.">
        <title>The status, quality, and expansion of the NIH full-length cDNA project: the Mammalian Gene Collection (MGC).</title>
        <authorList>
            <consortium name="The MGC Project Team"/>
        </authorList>
    </citation>
    <scope>NUCLEOTIDE SEQUENCE [LARGE SCALE MRNA]</scope>
    <source>
        <tissue>Cervix</tissue>
    </source>
</reference>
<reference key="8">
    <citation type="journal article" date="1997" name="Invest. Ophthalmol. Vis. Sci.">
        <title>Genomic organization of the human TIMP-1 gene. Investigation of a causative role in the pathogenesis of X-linked retinitis pigmentosa 2.</title>
        <authorList>
            <person name="Hardcastle A.J."/>
            <person name="Thiselton D.L."/>
            <person name="Nayudu M."/>
            <person name="Hampson R.M."/>
            <person name="Bhattacharya S.S."/>
        </authorList>
    </citation>
    <scope>NUCLEOTIDE SEQUENCE [GENOMIC DNA] OF 1-40</scope>
</reference>
<reference key="9">
    <citation type="journal article" date="1992" name="FEBS Lett.">
        <title>Isolation and characterization of tissue inhibitors of metalloproteinases (TIMP-1 and TIMP-2) from human rheumatoid synovial fluid.</title>
        <authorList>
            <person name="Osthues A."/>
            <person name="Knaueper V."/>
            <person name="Oberhoff R."/>
            <person name="Reinke H."/>
            <person name="Tschesche H."/>
        </authorList>
    </citation>
    <scope>PROTEIN SEQUENCE OF 24-38</scope>
    <scope>SUBCELLULAR LOCATION</scope>
    <scope>TISSUE SPECIFICITY</scope>
    <scope>FUNCTION</scope>
    <source>
        <tissue>Synovial fluid</tissue>
    </source>
</reference>
<reference key="10">
    <citation type="journal article" date="1991" name="Cytokine">
        <title>The cytokine-protease connection: identification of a 96-kD THP-1 gelatinase and regulation by interleukin-1 and cytokine inducers.</title>
        <authorList>
            <person name="van Ranst M."/>
            <person name="Norga K."/>
            <person name="Masure S."/>
            <person name="Proost P."/>
            <person name="Vandekerckhove F."/>
            <person name="Auwerx J."/>
            <person name="van Damme J."/>
            <person name="Opdenakker G."/>
        </authorList>
    </citation>
    <scope>PROTEIN SEQUENCE OF 24-52</scope>
</reference>
<reference key="11">
    <citation type="journal article" date="2004" name="Protein Sci.">
        <title>Signal peptide prediction based on analysis of experimentally verified cleavage sites.</title>
        <authorList>
            <person name="Zhang Z."/>
            <person name="Henzel W.J."/>
        </authorList>
    </citation>
    <scope>PROTEIN SEQUENCE OF 24-38</scope>
</reference>
<reference key="12">
    <citation type="submission" date="1992-07" db="EMBL/GenBank/DDBJ databases">
        <authorList>
            <person name="Matsuda T."/>
            <person name="Kohno K."/>
            <person name="Kuwano M."/>
        </authorList>
    </citation>
    <scope>NUCLEOTIDE SEQUENCE [GENOMIC DNA] OF 42-207</scope>
</reference>
<reference key="13">
    <citation type="journal article" date="1990" name="Biochem. J.">
        <title>Disulphide bond assignment in human tissue inhibitor of metalloproteinases (TIMP).</title>
        <authorList>
            <person name="Williamson R.A."/>
            <person name="Martson F.A.O."/>
            <person name="Angal S."/>
            <person name="Koklitis P."/>
            <person name="Panico M."/>
            <person name="Morris H.R."/>
            <person name="Carne A.F."/>
            <person name="Smith B.J."/>
            <person name="Harris T.J.R."/>
            <person name="Freedman R.B."/>
        </authorList>
    </citation>
    <scope>DISULFIDE BONDS</scope>
    <scope>PARTIAL PROTEIN SEQUENCE</scope>
</reference>
<reference key="14">
    <citation type="journal article" date="1992" name="Biochemistry">
        <title>Site-directed mutations that alter the inhibitory activity of the tissue inhibitor of metalloproteinases-1: importance of the N-terminal region between cysteine 3 and cysteine 13.</title>
        <authorList>
            <person name="O'Shea M."/>
            <person name="Willenbrock F."/>
            <person name="Williamson R.A."/>
            <person name="Cockett M.I."/>
            <person name="Freedman R.B."/>
            <person name="Reynolds J.J."/>
            <person name="Docherty A.J.P."/>
            <person name="Murphy G."/>
        </authorList>
    </citation>
    <scope>MUTAGENESIS</scope>
    <scope>FUNCTION</scope>
</reference>
<reference key="15">
    <citation type="journal article" date="1995" name="Blood">
        <title>Metalloproteinase inhibition and erythroid potentiation are independent activities of tissue inhibitor of metalloproteinases-1.</title>
        <authorList>
            <person name="Chesler L."/>
            <person name="Golde D.W."/>
            <person name="Bersch N."/>
            <person name="Johnson M.D."/>
        </authorList>
    </citation>
    <scope>FUNCTION AS A GROWTH FACTOR AND PROTEASE INHIBITOR</scope>
    <scope>INTERACTION WITH MMP3</scope>
    <scope>SUBCELLULAR LOCATION</scope>
    <scope>MUTAGENESIS OF HIS-30 AND GLN-32</scope>
</reference>
<reference key="16">
    <citation type="journal article" date="1996" name="J. Biol. Chem.">
        <title>Biochemical characterization of human collagenase-3.</title>
        <authorList>
            <person name="Knaeuper V."/>
            <person name="Lopez-Otin C."/>
            <person name="Smith B."/>
            <person name="Knight G."/>
            <person name="Murphy G."/>
        </authorList>
    </citation>
    <scope>INTERACTION WITH MMP13</scope>
    <scope>FUNCTION</scope>
</reference>
<reference key="17">
    <citation type="journal article" date="1997" name="J. Biol. Chem.">
        <title>The role of the C-terminal domain of human collagenase-3 (MMP-13) in the activation of procollagenase-3, substrate specificity, and tissue inhibitor of metalloproteinase interaction.</title>
        <authorList>
            <person name="Knaeuper V."/>
            <person name="Cowell S."/>
            <person name="Smith B."/>
            <person name="Lopez-Otin C."/>
            <person name="O'Shea M."/>
            <person name="Morris H."/>
            <person name="Zardi L."/>
            <person name="Murphy G."/>
        </authorList>
    </citation>
    <scope>INTERACTION WITH MMP13</scope>
    <scope>FUNCTION</scope>
</reference>
<reference key="18">
    <citation type="journal article" date="2005" name="J. Proteome Res.">
        <title>Human plasma N-glycoproteome analysis by immunoaffinity subtraction, hydrazide chemistry, and mass spectrometry.</title>
        <authorList>
            <person name="Liu T."/>
            <person name="Qian W.-J."/>
            <person name="Gritsenko M.A."/>
            <person name="Camp D.G. II"/>
            <person name="Monroe M.E."/>
            <person name="Moore R.J."/>
            <person name="Smith R.D."/>
        </authorList>
    </citation>
    <scope>GLYCOSYLATION [LARGE SCALE ANALYSIS] AT ASN-53</scope>
    <source>
        <tissue>Plasma</tissue>
    </source>
</reference>
<reference key="19">
    <citation type="journal article" date="2006" name="EMBO J.">
        <title>Identification of CD63 as a tissue inhibitor of metalloproteinase-1 interacting cell surface protein.</title>
        <authorList>
            <person name="Jung K.K."/>
            <person name="Liu X.W."/>
            <person name="Chirco R."/>
            <person name="Fridman R."/>
            <person name="Kim H.R."/>
        </authorList>
    </citation>
    <scope>FUNCTION</scope>
    <scope>INTERACTION WITH CD63</scope>
</reference>
<reference key="20">
    <citation type="journal article" date="2006" name="J. Proteome Res.">
        <title>Identification of N-linked glycoproteins in human saliva by glycoprotein capture and mass spectrometry.</title>
        <authorList>
            <person name="Ramachandran P."/>
            <person name="Boontheung P."/>
            <person name="Xie Y."/>
            <person name="Sondej M."/>
            <person name="Wong D.T."/>
            <person name="Loo J.A."/>
        </authorList>
    </citation>
    <scope>GLYCOSYLATION [LARGE SCALE ANALYSIS] AT ASN-53 AND ASN-101</scope>
    <source>
        <tissue>Saliva</tissue>
    </source>
</reference>
<reference key="21">
    <citation type="journal article" date="2006" name="Mol. Cell. Proteomics">
        <title>Elucidation of N-glycosylation sites on human platelet proteins: a glycoproteomic approach.</title>
        <authorList>
            <person name="Lewandrowski U."/>
            <person name="Moebius J."/>
            <person name="Walter U."/>
            <person name="Sickmann A."/>
        </authorList>
    </citation>
    <scope>GLYCOSYLATION [LARGE SCALE ANALYSIS] AT ASN-53</scope>
    <source>
        <tissue>Platelet</tissue>
    </source>
</reference>
<reference key="22">
    <citation type="journal article" date="2009" name="Mol. Cell. Proteomics">
        <title>A strategy for precise and large scale identification of core fucosylated glycoproteins.</title>
        <authorList>
            <person name="Jia W."/>
            <person name="Lu Z."/>
            <person name="Fu Y."/>
            <person name="Wang H.P."/>
            <person name="Wang L.H."/>
            <person name="Chi H."/>
            <person name="Yuan Z.F."/>
            <person name="Zheng Z.B."/>
            <person name="Song L.N."/>
            <person name="Han H.H."/>
            <person name="Liang Y.M."/>
            <person name="Wang J.L."/>
            <person name="Cai Y."/>
            <person name="Zhang Y.K."/>
            <person name="Deng Y.L."/>
            <person name="Ying W.T."/>
            <person name="He S.M."/>
            <person name="Qian X.H."/>
        </authorList>
    </citation>
    <scope>GLYCOSYLATION AT ASN-53</scope>
</reference>
<reference key="23">
    <citation type="journal article" date="2011" name="BMC Syst. Biol.">
        <title>Initial characterization of the human central proteome.</title>
        <authorList>
            <person name="Burkard T.R."/>
            <person name="Planyavsky M."/>
            <person name="Kaupe I."/>
            <person name="Breitwieser F.P."/>
            <person name="Buerckstuemmer T."/>
            <person name="Bennett K.L."/>
            <person name="Superti-Furga G."/>
            <person name="Colinge J."/>
        </authorList>
    </citation>
    <scope>IDENTIFICATION BY MASS SPECTROMETRY [LARGE SCALE ANALYSIS]</scope>
</reference>
<reference key="24">
    <citation type="journal article" date="2012" name="J. Proteome Res.">
        <title>Resveratrol-induced changes of the human adipocyte secretion profile.</title>
        <authorList>
            <person name="Rosenow A."/>
            <person name="Noben J.P."/>
            <person name="Jocken J."/>
            <person name="Kallendrusch S."/>
            <person name="Fischer-Posovszky P."/>
            <person name="Mariman E.C."/>
            <person name="Renes J."/>
        </authorList>
    </citation>
    <scope>IDENTIFICATION BY MASS SPECTROMETRY [LARGE SCALE ANALYSIS]</scope>
</reference>
<reference key="25">
    <citation type="journal article" date="2013" name="Mol. Cancer">
        <title>Timp1 interacts with beta-1 integrin and CD63 along melanoma genesis and confers anoikis resistance by activating PI3-K signaling pathway independently of Akt phosphorylation.</title>
        <authorList>
            <person name="Toricelli M."/>
            <person name="Melo F.H."/>
            <person name="Peres G.B."/>
            <person name="Silva D.C."/>
            <person name="Jasiulionis M.G."/>
        </authorList>
    </citation>
    <scope>IDENTIFICATION IN A COMPLEX WITH CD63 AND ITGB1</scope>
</reference>
<reference key="26">
    <citation type="journal article" date="2014" name="Biochem. J.">
        <title>TIMP-1 modulates chemotaxis of human neural stem cells through CD63 and integrin signalling.</title>
        <authorList>
            <person name="Lee S.Y."/>
            <person name="Kim J.M."/>
            <person name="Cho S.Y."/>
            <person name="Kim H.S."/>
            <person name="Shin H.S."/>
            <person name="Jeon J.Y."/>
            <person name="Kausar R."/>
            <person name="Jeong S.Y."/>
            <person name="Lee Y.S."/>
            <person name="Lee M.A."/>
        </authorList>
    </citation>
    <scope>FUNCTION</scope>
    <scope>SUBCELLULAR LOCATION</scope>
</reference>
<reference key="27">
    <citation type="journal article" date="2014" name="Cell. Mol. Life Sci.">
        <title>Cytokine functions of TIMP-1.</title>
        <authorList>
            <person name="Ries C."/>
        </authorList>
    </citation>
    <scope>REVIEW</scope>
</reference>
<reference key="28">
    <citation type="journal article" date="2015" name="Cell">
        <title>A single kinase generates the majority of the secreted phosphoproteome.</title>
        <authorList>
            <person name="Tagliabracci V.S."/>
            <person name="Wiley S.E."/>
            <person name="Guo X."/>
            <person name="Kinch L.N."/>
            <person name="Durrant E."/>
            <person name="Wen J."/>
            <person name="Xiao J."/>
            <person name="Cui J."/>
            <person name="Nguyen K.B."/>
            <person name="Engel J.L."/>
            <person name="Coon J.J."/>
            <person name="Grishin N."/>
            <person name="Pinna L.A."/>
            <person name="Pagliarini D.J."/>
            <person name="Dixon J.E."/>
        </authorList>
    </citation>
    <scope>PHOSPHORYLATION AT SER-178</scope>
</reference>
<reference key="29">
    <citation type="journal article" date="1997" name="Nature">
        <title>Mechanism of inhibition of the human matrix metalloproteinase stromelysin-1 by TIMP-1.</title>
        <authorList>
            <person name="Gomis-Rueth F.-X."/>
            <person name="Maskos K."/>
            <person name="Betz M."/>
            <person name="Bergner A."/>
            <person name="Huber R."/>
            <person name="Suzuki K."/>
            <person name="Yoshida N."/>
            <person name="Nagase H."/>
            <person name="Brew K."/>
            <person name="Bourenkov G.P."/>
            <person name="Bartunik H."/>
            <person name="Bode W."/>
        </authorList>
    </citation>
    <scope>X-RAY CRYSTALLOGRAPHY (2.80 ANGSTROMS) OF 24-207 IN COMPLEX WITH MMP3</scope>
    <scope>INTERACTION WITH MMP3</scope>
</reference>
<reference key="30">
    <citation type="journal article" date="2000" name="J. Mol. Biol.">
        <title>NMR structure of tissue inhibitor of metalloproteinases-1 implicates localized induced fit in recognition of matrix metalloproteinases.</title>
        <authorList>
            <person name="Wu B."/>
            <person name="Arumugam S."/>
            <person name="Gao G."/>
            <person name="Lee G.I."/>
            <person name="Semenchenko V."/>
            <person name="Huang W."/>
            <person name="Brew K."/>
            <person name="Van Doren S.R."/>
        </authorList>
    </citation>
    <scope>STRUCTURE BY NMR OF 24-149</scope>
    <scope>DISULFIDE BOND</scope>
</reference>
<reference key="31">
    <citation type="journal article" date="2003" name="Biochemistry">
        <title>Global orientation of bound MMP-3 and N-TIMP-1 in solution via residual dipolar couplings.</title>
        <authorList>
            <person name="Arumugam S."/>
            <person name="Van Doren S.R."/>
        </authorList>
    </citation>
    <scope>STRUCTURE BY NMR OF 24-149 IN COMPLEX WITH MMP3</scope>
    <scope>INTERACTION WITH MMP3</scope>
</reference>
<reference key="32">
    <citation type="journal article" date="2007" name="J. Biol. Chem.">
        <title>Crystal structure of the catalytic domain of matrix metalloproteinase-1 in complex with the inhibitory domain of tissue inhibitor of metalloproteinase-1.</title>
        <authorList>
            <person name="Iyer S."/>
            <person name="Wei S."/>
            <person name="Brew K."/>
            <person name="Acharya K.R."/>
        </authorList>
    </citation>
    <scope>X-RAY CRYSTALLOGRAPHY (2.54 ANGSTROMS) OF 24-149 IN COMPLEX WITH MMP1</scope>
    <scope>FUNCTION</scope>
    <scope>INTERACTION WITH MMP1 AND MMP3</scope>
    <scope>DISULFIDE BOND</scope>
    <scope>MUTAGENESIS OF THR-25</scope>
</reference>
<reference key="33">
    <citation type="journal article" date="2010" name="Biochemistry">
        <title>The intrinsic protein flexibility of endogenous protease inhibitor TIMP-1 controls its binding interface and affects its function.</title>
        <authorList>
            <person name="Grossman M."/>
            <person name="Tworowski D."/>
            <person name="Dym O."/>
            <person name="Lee M.H."/>
            <person name="Levy Y."/>
            <person name="Murphy G."/>
            <person name="Sagi I."/>
        </authorList>
    </citation>
    <scope>X-RAY CRYSTALLOGRAPHY (2.05 ANGSTROMS) OF 24-148 OF MUTANT LEU-121 IN COMPLEX WITH MMP14</scope>
    <scope>FUNCTION</scope>
    <scope>INTERACTION WITH MMP14</scope>
    <scope>DISULFIDE BOND</scope>
    <scope>MUTAGENESIS OF THR-121</scope>
</reference>
<reference key="34">
    <citation type="journal article" date="2012" name="J. Biol. Chem.">
        <title>Matrix metalloproteinase-10 (MMP10) interaction with tissue inhibitors of metalloproteinases TIMP-1 and TIMP-2: binding studies and crystal structure.</title>
        <authorList>
            <person name="Batra J."/>
            <person name="Robinson J."/>
            <person name="Soares A.S."/>
            <person name="Fields A.P."/>
            <person name="Radisky D.C."/>
            <person name="Radisky E.S."/>
        </authorList>
    </citation>
    <scope>X-RAY CRYSTALLOGRAPHY (1.90 ANGSTROMS) OF 24-207 IN COMPLEX WITH MMP10</scope>
    <scope>FUNCTION</scope>
    <scope>INTERACTION WITH MMP10</scope>
    <scope>DISULFIDE BOND</scope>
</reference>
<keyword id="KW-0002">3D-structure</keyword>
<keyword id="KW-0903">Direct protein sequencing</keyword>
<keyword id="KW-1015">Disulfide bond</keyword>
<keyword id="KW-0325">Glycoprotein</keyword>
<keyword id="KW-0339">Growth factor</keyword>
<keyword id="KW-0479">Metal-binding</keyword>
<keyword id="KW-0481">Metalloenzyme inhibitor</keyword>
<keyword id="KW-0483">Metalloprotease inhibitor</keyword>
<keyword id="KW-0597">Phosphoprotein</keyword>
<keyword id="KW-0646">Protease inhibitor</keyword>
<keyword id="KW-1267">Proteomics identification</keyword>
<keyword id="KW-1185">Reference proteome</keyword>
<keyword id="KW-0964">Secreted</keyword>
<keyword id="KW-0732">Signal</keyword>
<keyword id="KW-0862">Zinc</keyword>
<name>TIMP1_HUMAN</name>
<comment type="function">
    <text evidence="4 10 11 12 14 16 18 21 22 23 24 25">Metalloproteinase inhibitor that functions by forming one to one complexes with target metalloproteinases, such as collagenases, and irreversibly inactivates them by binding to their catalytic zinc cofactor. Acts on MMP1, MMP2, MMP3, MMP7, MMP8, MMP9, MMP10, MMP11, MMP12, MMP13 and MMP16. Does not act on MMP14. Also functions as a growth factor that regulates cell differentiation, migration and cell death and activates cellular signaling cascades via CD63 and ITGB1. Plays a role in integrin signaling. Mediates erythropoiesis in vitro; but, unlike IL3, it is species-specific, stimulating the growth and differentiation of only human and murine erythroid progenitors.</text>
</comment>
<comment type="subunit">
    <text evidence="3 10 11 14 16 17 23 24 25 26">Interacts with MMP1, MMP3, MMP10 and MMP13, but has only very low affinity for MMP14. Interacts with CD63; identified in a complex with CD63 and ITGB1.</text>
</comment>
<comment type="interaction">
    <interactant intactId="EBI-712536">
        <id>P01033</id>
    </interactant>
    <interactant intactId="EBI-762053">
        <id>P08962</id>
        <label>CD63</label>
    </interactant>
    <organismsDiffer>false</organismsDiffer>
    <experiments>8</experiments>
</comment>
<comment type="interaction">
    <interactant intactId="EBI-712536">
        <id>P01033</id>
    </interactant>
    <interactant intactId="EBI-682379">
        <id>P27701</id>
        <label>CD82</label>
    </interactant>
    <organismsDiffer>false</organismsDiffer>
    <experiments>11</experiments>
</comment>
<comment type="interaction">
    <interactant intactId="EBI-712536">
        <id>P01033</id>
    </interactant>
    <interactant intactId="EBI-2464511">
        <id>P20908</id>
        <label>COL5A1</label>
    </interactant>
    <organismsDiffer>false</organismsDiffer>
    <experiments>2</experiments>
</comment>
<comment type="subcellular location">
    <subcellularLocation>
        <location evidence="12 18 20 21 22 23">Secreted</location>
    </subcellularLocation>
</comment>
<comment type="tissue specificity">
    <text evidence="12">Detected in rheumatoid synovial fluid (at protein level).</text>
</comment>
<comment type="PTM">
    <text evidence="2 14 15 16 20">The activity of TIMP1 is dependent on the presence of disulfide bonds.</text>
</comment>
<comment type="PTM">
    <text evidence="6 7 9 13 20 21 22">N-glycosylated.</text>
</comment>
<comment type="similarity">
    <text evidence="27">Belongs to the protease inhibitor I35 (TIMP) family.</text>
</comment>